<organism>
    <name type="scientific">Sinorhizobium fredii (strain NBRC 101917 / NGR234)</name>
    <dbReference type="NCBI Taxonomy" id="394"/>
    <lineage>
        <taxon>Bacteria</taxon>
        <taxon>Pseudomonadati</taxon>
        <taxon>Pseudomonadota</taxon>
        <taxon>Alphaproteobacteria</taxon>
        <taxon>Hyphomicrobiales</taxon>
        <taxon>Rhizobiaceae</taxon>
        <taxon>Sinorhizobium/Ensifer group</taxon>
        <taxon>Sinorhizobium</taxon>
    </lineage>
</organism>
<feature type="signal peptide" evidence="1">
    <location>
        <begin position="1"/>
        <end position="33"/>
    </location>
</feature>
<feature type="chain" id="PRO_0000014168" description="Uncharacterized protein y4jT">
    <location>
        <begin position="34"/>
        <end position="336"/>
    </location>
</feature>
<reference key="1">
    <citation type="journal article" date="1997" name="Nature">
        <title>Molecular basis of symbiosis between Rhizobium and legumes.</title>
        <authorList>
            <person name="Freiberg C.A."/>
            <person name="Fellay R."/>
            <person name="Bairoch A."/>
            <person name="Broughton W.J."/>
            <person name="Rosenthal A."/>
            <person name="Perret X."/>
        </authorList>
    </citation>
    <scope>NUCLEOTIDE SEQUENCE [LARGE SCALE GENOMIC DNA]</scope>
    <source>
        <strain>NBRC 101917 / NGR234</strain>
    </source>
</reference>
<reference key="2">
    <citation type="journal article" date="2009" name="Appl. Environ. Microbiol.">
        <title>Rhizobium sp. strain NGR234 possesses a remarkable number of secretion systems.</title>
        <authorList>
            <person name="Schmeisser C."/>
            <person name="Liesegang H."/>
            <person name="Krysciak D."/>
            <person name="Bakkou N."/>
            <person name="Le Quere A."/>
            <person name="Wollherr A."/>
            <person name="Heinemeyer I."/>
            <person name="Morgenstern B."/>
            <person name="Pommerening-Roeser A."/>
            <person name="Flores M."/>
            <person name="Palacios R."/>
            <person name="Brenner S."/>
            <person name="Gottschalk G."/>
            <person name="Schmitz R.A."/>
            <person name="Broughton W.J."/>
            <person name="Perret X."/>
            <person name="Strittmatter A.W."/>
            <person name="Streit W.R."/>
        </authorList>
    </citation>
    <scope>NUCLEOTIDE SEQUENCE [LARGE SCALE GENOMIC DNA]</scope>
    <source>
        <strain>NBRC 101917 / NGR234</strain>
    </source>
</reference>
<gene>
    <name type="ordered locus">NGR_a02950</name>
    <name type="ORF">y4jT</name>
</gene>
<evidence type="ECO:0000255" key="1"/>
<sequence length="336" mass="36389">MGSAWPAEIRKIAKISKRLLGATVILGFGVAEAQAAEFFGTFSSGPAGQFIDADPRPLFELSSDFSFDDPNGLKWPVPTGTRVDGASIPQTFWSIIGGPFEGAYLKASVIHDYFCETKSRTAHDTHRNFYYGMRANGVPGWKAKAMYWAVATYGPDWTLETKVVNELQCKPTPFGGRTCSSLPKMVTTTVEKQAINLEDPKALAVAVGKFNAIARNLKTSDGETLDLLPTGVVSGSLESIETNATNAREMFATSDYRLDPKLLGVILEPKQIKLDSIDAWPDGQIPSFTDVQAQGLPQTGGLVGGNGIVLSPAEFENFEQRLDLSPTDFTLPSKLE</sequence>
<name>Y4JT_SINFN</name>
<geneLocation type="plasmid">
    <name>sym pNGR234a</name>
</geneLocation>
<protein>
    <recommendedName>
        <fullName>Uncharacterized protein y4jT</fullName>
    </recommendedName>
</protein>
<proteinExistence type="inferred from homology"/>
<dbReference type="EMBL" id="U00090">
    <property type="protein sequence ID" value="AAB91732.1"/>
    <property type="molecule type" value="Genomic_DNA"/>
</dbReference>
<dbReference type="RefSeq" id="NP_443930.1">
    <property type="nucleotide sequence ID" value="NC_000914.2"/>
</dbReference>
<dbReference type="RefSeq" id="WP_010875318.1">
    <property type="nucleotide sequence ID" value="NC_000914.2"/>
</dbReference>
<dbReference type="KEGG" id="rhi:NGR_a02950"/>
<dbReference type="eggNOG" id="ENOG5032DCW">
    <property type="taxonomic scope" value="Bacteria"/>
</dbReference>
<dbReference type="HOGENOM" id="CLU_828675_0_0_5"/>
<dbReference type="OrthoDB" id="7860705at2"/>
<dbReference type="Proteomes" id="UP000001054">
    <property type="component" value="Plasmid pNGR234a"/>
</dbReference>
<dbReference type="InterPro" id="IPR010767">
    <property type="entry name" value="Phage_CGC-2007_Cje0229"/>
</dbReference>
<dbReference type="Pfam" id="PF07087">
    <property type="entry name" value="DUF1353"/>
    <property type="match status" value="1"/>
</dbReference>
<keyword id="KW-0614">Plasmid</keyword>
<keyword id="KW-1185">Reference proteome</keyword>
<keyword id="KW-0732">Signal</keyword>
<accession>P55520</accession>